<evidence type="ECO:0000250" key="1"/>
<evidence type="ECO:0000305" key="2"/>
<comment type="catalytic activity">
    <reaction>
        <text>carbamoyl phosphate + L-ornithine = L-citrulline + phosphate + H(+)</text>
        <dbReference type="Rhea" id="RHEA:19513"/>
        <dbReference type="ChEBI" id="CHEBI:15378"/>
        <dbReference type="ChEBI" id="CHEBI:43474"/>
        <dbReference type="ChEBI" id="CHEBI:46911"/>
        <dbReference type="ChEBI" id="CHEBI:57743"/>
        <dbReference type="ChEBI" id="CHEBI:58228"/>
        <dbReference type="EC" id="2.1.3.3"/>
    </reaction>
</comment>
<comment type="pathway">
    <text>Amino-acid degradation; L-arginine degradation via ADI pathway; carbamoyl phosphate from L-arginine: step 2/2.</text>
</comment>
<comment type="subcellular location">
    <subcellularLocation>
        <location evidence="1">Cytoplasm</location>
    </subcellularLocation>
</comment>
<comment type="similarity">
    <text evidence="2">Belongs to the aspartate/ornithine carbamoyltransferase superfamily. OTCase family.</text>
</comment>
<organism>
    <name type="scientific">Streptococcus pyogenes</name>
    <dbReference type="NCBI Taxonomy" id="1314"/>
    <lineage>
        <taxon>Bacteria</taxon>
        <taxon>Bacillati</taxon>
        <taxon>Bacillota</taxon>
        <taxon>Bacilli</taxon>
        <taxon>Lactobacillales</taxon>
        <taxon>Streptococcaceae</taxon>
        <taxon>Streptococcus</taxon>
    </lineage>
</organism>
<keyword id="KW-0056">Arginine metabolism</keyword>
<keyword id="KW-0963">Cytoplasm</keyword>
<keyword id="KW-0808">Transferase</keyword>
<name>OTCC_STRPY</name>
<feature type="initiator methionine" description="Removed" evidence="1">
    <location>
        <position position="1"/>
    </location>
</feature>
<feature type="chain" id="PRO_0000113037" description="Ornithine carbamoyltransferase, catabolic">
    <location>
        <begin position="2"/>
        <end position="107" status="greater than"/>
    </location>
</feature>
<feature type="binding site" evidence="1">
    <location>
        <begin position="57"/>
        <end position="61"/>
    </location>
    <ligand>
        <name>carbamoyl phosphate</name>
        <dbReference type="ChEBI" id="CHEBI:58228"/>
    </ligand>
</feature>
<feature type="binding site" evidence="1">
    <location>
        <position position="84"/>
    </location>
    <ligand>
        <name>carbamoyl phosphate</name>
        <dbReference type="ChEBI" id="CHEBI:58228"/>
    </ligand>
</feature>
<feature type="site" description="Important for structural integrity" evidence="1">
    <location>
        <position position="32"/>
    </location>
</feature>
<feature type="non-terminal residue">
    <location>
        <position position="107"/>
    </location>
</feature>
<proteinExistence type="inferred from homology"/>
<protein>
    <recommendedName>
        <fullName>Ornithine carbamoyltransferase, catabolic</fullName>
        <shortName>OTCase</shortName>
        <ecNumber>2.1.3.3</ecNumber>
    </recommendedName>
</protein>
<dbReference type="EC" id="2.1.3.3"/>
<dbReference type="EMBL" id="D13790">
    <property type="protein sequence ID" value="BAA02940.1"/>
    <property type="molecule type" value="Genomic_DNA"/>
</dbReference>
<dbReference type="PIR" id="PE0009">
    <property type="entry name" value="PE0009"/>
</dbReference>
<dbReference type="SMR" id="P0C0C9"/>
<dbReference type="STRING" id="1314.SD89_06715"/>
<dbReference type="eggNOG" id="COG0078">
    <property type="taxonomic scope" value="Bacteria"/>
</dbReference>
<dbReference type="UniPathway" id="UPA00254">
    <property type="reaction ID" value="UER00365"/>
</dbReference>
<dbReference type="GO" id="GO:0005737">
    <property type="term" value="C:cytoplasm"/>
    <property type="evidence" value="ECO:0007669"/>
    <property type="project" value="UniProtKB-SubCell"/>
</dbReference>
<dbReference type="GO" id="GO:0016597">
    <property type="term" value="F:amino acid binding"/>
    <property type="evidence" value="ECO:0007669"/>
    <property type="project" value="InterPro"/>
</dbReference>
<dbReference type="GO" id="GO:0004585">
    <property type="term" value="F:ornithine carbamoyltransferase activity"/>
    <property type="evidence" value="ECO:0007669"/>
    <property type="project" value="UniProtKB-EC"/>
</dbReference>
<dbReference type="GO" id="GO:0042450">
    <property type="term" value="P:arginine biosynthetic process via ornithine"/>
    <property type="evidence" value="ECO:0007669"/>
    <property type="project" value="TreeGrafter"/>
</dbReference>
<dbReference type="GO" id="GO:0019547">
    <property type="term" value="P:arginine catabolic process to ornithine"/>
    <property type="evidence" value="ECO:0007669"/>
    <property type="project" value="UniProtKB-UniPathway"/>
</dbReference>
<dbReference type="GO" id="GO:0019240">
    <property type="term" value="P:citrulline biosynthetic process"/>
    <property type="evidence" value="ECO:0007669"/>
    <property type="project" value="TreeGrafter"/>
</dbReference>
<dbReference type="Gene3D" id="3.40.50.1370">
    <property type="entry name" value="Aspartate/ornithine carbamoyltransferase"/>
    <property type="match status" value="1"/>
</dbReference>
<dbReference type="InterPro" id="IPR006132">
    <property type="entry name" value="Asp/Orn_carbamoyltranf_P-bd"/>
</dbReference>
<dbReference type="InterPro" id="IPR006130">
    <property type="entry name" value="Asp/Orn_carbamoylTrfase"/>
</dbReference>
<dbReference type="InterPro" id="IPR036901">
    <property type="entry name" value="Asp/Orn_carbamoylTrfase_sf"/>
</dbReference>
<dbReference type="InterPro" id="IPR002292">
    <property type="entry name" value="Orn/put_carbamltrans"/>
</dbReference>
<dbReference type="PANTHER" id="PTHR45753:SF1">
    <property type="entry name" value="ORNITHINE CARBAMOYLTRANSFERASE, CATABOLIC"/>
    <property type="match status" value="1"/>
</dbReference>
<dbReference type="PANTHER" id="PTHR45753">
    <property type="entry name" value="ORNITHINE CARBAMOYLTRANSFERASE, MITOCHONDRIAL"/>
    <property type="match status" value="1"/>
</dbReference>
<dbReference type="Pfam" id="PF02729">
    <property type="entry name" value="OTCace_N"/>
    <property type="match status" value="1"/>
</dbReference>
<dbReference type="PRINTS" id="PR00102">
    <property type="entry name" value="OTCASE"/>
</dbReference>
<dbReference type="SUPFAM" id="SSF53671">
    <property type="entry name" value="Aspartate/ornithine carbamoyltransferase"/>
    <property type="match status" value="1"/>
</dbReference>
<dbReference type="PROSITE" id="PS00097">
    <property type="entry name" value="CARBAMOYLTRANSFERASE"/>
    <property type="match status" value="1"/>
</dbReference>
<accession>P0C0C9</accession>
<accession>P16964</accession>
<sequence>MTQVFQGRSFLAEKDFTRAELEYLIDFSAHLKDLKKRGVPHHYLEGKNIALLFEKTSTRTRAAFTTAAIDLGAHPEYLGANDIQLGKKESTEDTAKVLGRMFDGIEF</sequence>
<reference key="1">
    <citation type="journal article" date="1987" name="Agric. Biol. Chem.">
        <title>Cloning and expression of the antitumor glycoprotein gene of Streptococcus pyogenes Su in Escherichia coli.</title>
        <authorList>
            <person name="Kanaoka M."/>
            <person name="Kawanaka C."/>
            <person name="Negoro T."/>
            <person name="Fukita Y."/>
            <person name="Taya K."/>
            <person name="Agui H."/>
        </authorList>
    </citation>
    <scope>NUCLEOTIDE SEQUENCE [GENOMIC DNA]</scope>
    <source>
        <strain>ATCC 21060 / Su / DSM 2072</strain>
    </source>
</reference>
<gene>
    <name type="primary">arcB</name>
</gene>